<proteinExistence type="evidence at protein level"/>
<sequence length="158" mass="16462">MRHAKSAYPDGIADHDRPLAPRGIREAGLAGGWLRANLPAVDAVLCSTATRARQTLAHTGIDAPARYAERLYGAAPGTVIEEINRVGDNVTTLLVVGHEPTTSALAIVLASISGTDAAVAERISEKFPTSGIAVLRVAGHWADVEPGCAALVGFHVPR</sequence>
<dbReference type="EC" id="3.1.3.-"/>
<dbReference type="EMBL" id="AL123456">
    <property type="protein sequence ID" value="CCP44032.1"/>
    <property type="molecule type" value="Genomic_DNA"/>
</dbReference>
<dbReference type="PIR" id="D70755">
    <property type="entry name" value="D70755"/>
</dbReference>
<dbReference type="RefSeq" id="NP_215792.1">
    <property type="nucleotide sequence ID" value="NC_000962.3"/>
</dbReference>
<dbReference type="RefSeq" id="WP_003406581.1">
    <property type="nucleotide sequence ID" value="NC_000962.3"/>
</dbReference>
<dbReference type="SMR" id="P9WGF9"/>
<dbReference type="STRING" id="83332.Rv1276c"/>
<dbReference type="PaxDb" id="83332-Rv1276c"/>
<dbReference type="DNASU" id="887000"/>
<dbReference type="GeneID" id="887000"/>
<dbReference type="KEGG" id="mtu:Rv1276c"/>
<dbReference type="KEGG" id="mtv:RVBD_1276c"/>
<dbReference type="PATRIC" id="fig|83332.111.peg.1424"/>
<dbReference type="TubercuList" id="Rv1276c"/>
<dbReference type="eggNOG" id="COG2062">
    <property type="taxonomic scope" value="Bacteria"/>
</dbReference>
<dbReference type="InParanoid" id="P9WGF9"/>
<dbReference type="OrthoDB" id="9810154at2"/>
<dbReference type="PhylomeDB" id="P9WGF9"/>
<dbReference type="Proteomes" id="UP000001584">
    <property type="component" value="Chromosome"/>
</dbReference>
<dbReference type="GO" id="GO:0004722">
    <property type="term" value="F:protein serine/threonine phosphatase activity"/>
    <property type="evidence" value="ECO:0000318"/>
    <property type="project" value="GO_Central"/>
</dbReference>
<dbReference type="CDD" id="cd07067">
    <property type="entry name" value="HP_PGM_like"/>
    <property type="match status" value="1"/>
</dbReference>
<dbReference type="Gene3D" id="3.40.50.1240">
    <property type="entry name" value="Phosphoglycerate mutase-like"/>
    <property type="match status" value="1"/>
</dbReference>
<dbReference type="InterPro" id="IPR013078">
    <property type="entry name" value="His_Pase_superF_clade-1"/>
</dbReference>
<dbReference type="InterPro" id="IPR029033">
    <property type="entry name" value="His_PPase_superfam"/>
</dbReference>
<dbReference type="InterPro" id="IPR051021">
    <property type="entry name" value="Mito_Ser/Thr_phosphatase"/>
</dbReference>
<dbReference type="PANTHER" id="PTHR20935">
    <property type="entry name" value="PHOSPHOGLYCERATE MUTASE-RELATED"/>
    <property type="match status" value="1"/>
</dbReference>
<dbReference type="PANTHER" id="PTHR20935:SF1">
    <property type="entry name" value="SLL1549 PROTEIN"/>
    <property type="match status" value="1"/>
</dbReference>
<dbReference type="Pfam" id="PF00300">
    <property type="entry name" value="His_Phos_1"/>
    <property type="match status" value="1"/>
</dbReference>
<dbReference type="SMART" id="SM00855">
    <property type="entry name" value="PGAM"/>
    <property type="match status" value="1"/>
</dbReference>
<dbReference type="SUPFAM" id="SSF53254">
    <property type="entry name" value="Phosphoglycerate mutase-like"/>
    <property type="match status" value="1"/>
</dbReference>
<evidence type="ECO:0000305" key="1"/>
<protein>
    <recommendedName>
        <fullName>Uncharacterized protein Rv1276c</fullName>
        <ecNumber>3.1.3.-</ecNumber>
    </recommendedName>
</protein>
<reference key="1">
    <citation type="journal article" date="1998" name="Nature">
        <title>Deciphering the biology of Mycobacterium tuberculosis from the complete genome sequence.</title>
        <authorList>
            <person name="Cole S.T."/>
            <person name="Brosch R."/>
            <person name="Parkhill J."/>
            <person name="Garnier T."/>
            <person name="Churcher C.M."/>
            <person name="Harris D.E."/>
            <person name="Gordon S.V."/>
            <person name="Eiglmeier K."/>
            <person name="Gas S."/>
            <person name="Barry C.E. III"/>
            <person name="Tekaia F."/>
            <person name="Badcock K."/>
            <person name="Basham D."/>
            <person name="Brown D."/>
            <person name="Chillingworth T."/>
            <person name="Connor R."/>
            <person name="Davies R.M."/>
            <person name="Devlin K."/>
            <person name="Feltwell T."/>
            <person name="Gentles S."/>
            <person name="Hamlin N."/>
            <person name="Holroyd S."/>
            <person name="Hornsby T."/>
            <person name="Jagels K."/>
            <person name="Krogh A."/>
            <person name="McLean J."/>
            <person name="Moule S."/>
            <person name="Murphy L.D."/>
            <person name="Oliver S."/>
            <person name="Osborne J."/>
            <person name="Quail M.A."/>
            <person name="Rajandream M.A."/>
            <person name="Rogers J."/>
            <person name="Rutter S."/>
            <person name="Seeger K."/>
            <person name="Skelton S."/>
            <person name="Squares S."/>
            <person name="Squares R."/>
            <person name="Sulston J.E."/>
            <person name="Taylor K."/>
            <person name="Whitehead S."/>
            <person name="Barrell B.G."/>
        </authorList>
    </citation>
    <scope>NUCLEOTIDE SEQUENCE [LARGE SCALE GENOMIC DNA]</scope>
    <source>
        <strain>ATCC 25618 / H37Rv</strain>
    </source>
</reference>
<reference key="2">
    <citation type="journal article" date="2011" name="Mol. Cell. Proteomics">
        <title>Proteogenomic analysis of Mycobacterium tuberculosis by high resolution mass spectrometry.</title>
        <authorList>
            <person name="Kelkar D.S."/>
            <person name="Kumar D."/>
            <person name="Kumar P."/>
            <person name="Balakrishnan L."/>
            <person name="Muthusamy B."/>
            <person name="Yadav A.K."/>
            <person name="Shrivastava P."/>
            <person name="Marimuthu A."/>
            <person name="Anand S."/>
            <person name="Sundaram H."/>
            <person name="Kingsbury R."/>
            <person name="Harsha H.C."/>
            <person name="Nair B."/>
            <person name="Prasad T.S."/>
            <person name="Chauhan D.S."/>
            <person name="Katoch K."/>
            <person name="Katoch V.M."/>
            <person name="Kumar P."/>
            <person name="Chaerkady R."/>
            <person name="Ramachandran S."/>
            <person name="Dash D."/>
            <person name="Pandey A."/>
        </authorList>
    </citation>
    <scope>IDENTIFICATION BY MASS SPECTROMETRY [LARGE SCALE ANALYSIS]</scope>
    <source>
        <strain>ATCC 25618 / H37Rv</strain>
    </source>
</reference>
<comment type="similarity">
    <text evidence="1">Belongs to the SixA phosphatase family.</text>
</comment>
<gene>
    <name type="ordered locus">Rv1276c</name>
    <name type="ORF">MTCY50.06</name>
</gene>
<organism>
    <name type="scientific">Mycobacterium tuberculosis (strain ATCC 25618 / H37Rv)</name>
    <dbReference type="NCBI Taxonomy" id="83332"/>
    <lineage>
        <taxon>Bacteria</taxon>
        <taxon>Bacillati</taxon>
        <taxon>Actinomycetota</taxon>
        <taxon>Actinomycetes</taxon>
        <taxon>Mycobacteriales</taxon>
        <taxon>Mycobacteriaceae</taxon>
        <taxon>Mycobacterium</taxon>
        <taxon>Mycobacterium tuberculosis complex</taxon>
    </lineage>
</organism>
<accession>P9WGF9</accession>
<accession>L0T6D9</accession>
<accession>Q11043</accession>
<feature type="chain" id="PRO_0000214573" description="Uncharacterized protein Rv1276c">
    <location>
        <begin position="1"/>
        <end position="158"/>
    </location>
</feature>
<name>Y1276_MYCTU</name>
<keyword id="KW-0378">Hydrolase</keyword>
<keyword id="KW-1185">Reference proteome</keyword>